<evidence type="ECO:0000255" key="1"/>
<evidence type="ECO:0000255" key="2">
    <source>
        <dbReference type="PROSITE-ProRule" id="PRU00711"/>
    </source>
</evidence>
<evidence type="ECO:0000269" key="3">
    <source>
    </source>
</evidence>
<evidence type="ECO:0000269" key="4">
    <source>
    </source>
</evidence>
<evidence type="ECO:0000303" key="5">
    <source>
    </source>
</evidence>
<evidence type="ECO:0000305" key="6">
    <source>
    </source>
</evidence>
<evidence type="ECO:0000305" key="7">
    <source>
    </source>
</evidence>
<evidence type="ECO:0000312" key="8">
    <source>
        <dbReference type="EMBL" id="ABI68022.1"/>
    </source>
</evidence>
<sequence length="714" mass="81418">MIFGFHPLEGGYDVPMRVVGANIPYEWLIYVIMLIPVSVFLFGFWKKLEVWLLAKGEIHRNDKIAQRIWSWFVFSFAQARVIRKPLAGWMHAFLFWGFLVLFLAAGIDAMHNMISWPHLEGNFYIGFSWVVDVLGFLALIGVMVLGFVRYFQKPERLNDTKSSDGWIILLIFAILLTGYFIEGLRIAAQIKLSTTMQQIAYERAASPFGWMFASFFGSMSVDAMLMWHRLLWWFHMAIAFLFIALVPFTKLWHIFASMLNYTFRDLEPSANRMVYNIEEAETFGVENIEDFGWKDLLDLDSCIRCGRCQENCPAYNTGKHLNPKITLIQNMKAHLDAKAPYLLAAKASGAEVEEMAMTEEAAAEEVNPMEQSLLYDVVGSETIWDCTNCRACMEHCPMFIEHIPKIVEMRRNLVMWQGDMPGEAQMAFTNMERNYNPWGVGWAGRAGWLDERGVREMVNLLPEDGKEFEYLLYAGCAVSFDDRYKRVGEALVRLLNKAGVSFGYLGTEEYCCGDSARRLGNEYLYQTLVSQNLESFNNYGVKKIIVVCPHGYTALKNEYPQMGGNYEVYHYTEILAKLVAEGKLKPSKPLGVKMTYHDSCFLGRHNGVYDQPRNVLKAAGGQVIEIEKAKEFGFCCGAGGGRMWLEEEAVLKDGIQYKRINDTRTDQLLVPNPEMIVTNCPFCLTMIADGVKAAEAEESTKVFDVAEVLWKAME</sequence>
<dbReference type="EC" id="1.18.-.-" evidence="7"/>
<dbReference type="EMBL" id="CP000448">
    <property type="protein sequence ID" value="ABI68022.1"/>
    <property type="molecule type" value="Genomic_DNA"/>
</dbReference>
<dbReference type="RefSeq" id="WP_011640127.1">
    <property type="nucleotide sequence ID" value="NC_008346.1"/>
</dbReference>
<dbReference type="STRING" id="335541.Swol_0698"/>
<dbReference type="KEGG" id="swo:Swol_0698"/>
<dbReference type="eggNOG" id="COG0247">
    <property type="taxonomic scope" value="Bacteria"/>
</dbReference>
<dbReference type="eggNOG" id="COG2181">
    <property type="taxonomic scope" value="Bacteria"/>
</dbReference>
<dbReference type="HOGENOM" id="CLU_005304_1_0_9"/>
<dbReference type="OrthoDB" id="5241828at2"/>
<dbReference type="UniPathway" id="UPA00863"/>
<dbReference type="Proteomes" id="UP000001968">
    <property type="component" value="Chromosome"/>
</dbReference>
<dbReference type="GO" id="GO:0005886">
    <property type="term" value="C:plasma membrane"/>
    <property type="evidence" value="ECO:0007669"/>
    <property type="project" value="UniProtKB-SubCell"/>
</dbReference>
<dbReference type="GO" id="GO:0051539">
    <property type="term" value="F:4 iron, 4 sulfur cluster binding"/>
    <property type="evidence" value="ECO:0007669"/>
    <property type="project" value="UniProtKB-KW"/>
</dbReference>
<dbReference type="GO" id="GO:0046872">
    <property type="term" value="F:metal ion binding"/>
    <property type="evidence" value="ECO:0007669"/>
    <property type="project" value="UniProtKB-KW"/>
</dbReference>
<dbReference type="GO" id="GO:0016491">
    <property type="term" value="F:oxidoreductase activity"/>
    <property type="evidence" value="ECO:0007669"/>
    <property type="project" value="UniProtKB-KW"/>
</dbReference>
<dbReference type="GO" id="GO:0019605">
    <property type="term" value="P:butyrate metabolic process"/>
    <property type="evidence" value="ECO:0007669"/>
    <property type="project" value="UniProtKB-UniPathway"/>
</dbReference>
<dbReference type="Gene3D" id="1.10.1060.10">
    <property type="entry name" value="Alpha-helical ferredoxin"/>
    <property type="match status" value="1"/>
</dbReference>
<dbReference type="Gene3D" id="1.20.950.20">
    <property type="entry name" value="Transmembrane di-heme cytochromes, Chain C"/>
    <property type="match status" value="1"/>
</dbReference>
<dbReference type="InterPro" id="IPR017896">
    <property type="entry name" value="4Fe4S_Fe-S-bd"/>
</dbReference>
<dbReference type="InterPro" id="IPR017900">
    <property type="entry name" value="4Fe4S_Fe_S_CS"/>
</dbReference>
<dbReference type="InterPro" id="IPR004017">
    <property type="entry name" value="Cys_rich_dom"/>
</dbReference>
<dbReference type="InterPro" id="IPR051460">
    <property type="entry name" value="HdrC_iron-sulfur_subunit"/>
</dbReference>
<dbReference type="InterPro" id="IPR009051">
    <property type="entry name" value="Helical_ferredxn"/>
</dbReference>
<dbReference type="InterPro" id="IPR023234">
    <property type="entry name" value="NarG-like_domain"/>
</dbReference>
<dbReference type="InterPro" id="IPR036197">
    <property type="entry name" value="NarG-like_sf"/>
</dbReference>
<dbReference type="PANTHER" id="PTHR43255:SF1">
    <property type="entry name" value="IRON-SULFUR-BINDING OXIDOREDUCTASE FADF-RELATED"/>
    <property type="match status" value="1"/>
</dbReference>
<dbReference type="PANTHER" id="PTHR43255">
    <property type="entry name" value="IRON-SULFUR-BINDING OXIDOREDUCTASE FADF-RELATED-RELATED"/>
    <property type="match status" value="1"/>
</dbReference>
<dbReference type="Pfam" id="PF02754">
    <property type="entry name" value="CCG"/>
    <property type="match status" value="2"/>
</dbReference>
<dbReference type="Pfam" id="PF13183">
    <property type="entry name" value="Fer4_8"/>
    <property type="match status" value="1"/>
</dbReference>
<dbReference type="Pfam" id="PF02665">
    <property type="entry name" value="Nitrate_red_gam"/>
    <property type="match status" value="1"/>
</dbReference>
<dbReference type="SUPFAM" id="SSF46548">
    <property type="entry name" value="alpha-helical ferredoxin"/>
    <property type="match status" value="1"/>
</dbReference>
<dbReference type="SUPFAM" id="SSF103501">
    <property type="entry name" value="Respiratory nitrate reductase 1 gamma chain"/>
    <property type="match status" value="1"/>
</dbReference>
<dbReference type="PROSITE" id="PS00198">
    <property type="entry name" value="4FE4S_FER_1"/>
    <property type="match status" value="2"/>
</dbReference>
<dbReference type="PROSITE" id="PS51379">
    <property type="entry name" value="4FE4S_FER_2"/>
    <property type="match status" value="2"/>
</dbReference>
<organism>
    <name type="scientific">Syntrophomonas wolfei subsp. wolfei (strain DSM 2245B / Goettingen)</name>
    <dbReference type="NCBI Taxonomy" id="335541"/>
    <lineage>
        <taxon>Bacteria</taxon>
        <taxon>Bacillati</taxon>
        <taxon>Bacillota</taxon>
        <taxon>Clostridia</taxon>
        <taxon>Eubacteriales</taxon>
        <taxon>Syntrophomonadaceae</taxon>
        <taxon>Syntrophomonas</taxon>
    </lineage>
</organism>
<feature type="chain" id="PRO_0000442216" description="EtfAB:quinone oxidoreductase">
    <location>
        <begin position="1"/>
        <end position="714"/>
    </location>
</feature>
<feature type="transmembrane region" description="Helical" evidence="1">
    <location>
        <begin position="25"/>
        <end position="45"/>
    </location>
</feature>
<feature type="transmembrane region" description="Helical" evidence="1">
    <location>
        <begin position="87"/>
        <end position="107"/>
    </location>
</feature>
<feature type="transmembrane region" description="Helical" evidence="1">
    <location>
        <begin position="125"/>
        <end position="145"/>
    </location>
</feature>
<feature type="transmembrane region" description="Helical" evidence="1">
    <location>
        <begin position="164"/>
        <end position="184"/>
    </location>
</feature>
<feature type="transmembrane region" description="Helical" evidence="1">
    <location>
        <begin position="207"/>
        <end position="227"/>
    </location>
</feature>
<feature type="transmembrane region" description="Helical" evidence="1">
    <location>
        <begin position="236"/>
        <end position="256"/>
    </location>
</feature>
<feature type="domain" description="4Fe-4S ferredoxin-type 1" evidence="2">
    <location>
        <begin position="293"/>
        <end position="324"/>
    </location>
</feature>
<feature type="domain" description="4Fe-4S ferredoxin-type 2" evidence="2">
    <location>
        <begin position="375"/>
        <end position="405"/>
    </location>
</feature>
<feature type="binding site" evidence="2">
    <location>
        <position position="302"/>
    </location>
    <ligand>
        <name>[4Fe-4S] cluster</name>
        <dbReference type="ChEBI" id="CHEBI:49883"/>
        <label>1</label>
    </ligand>
</feature>
<feature type="binding site" evidence="2">
    <location>
        <position position="305"/>
    </location>
    <ligand>
        <name>[4Fe-4S] cluster</name>
        <dbReference type="ChEBI" id="CHEBI:49883"/>
        <label>1</label>
    </ligand>
</feature>
<feature type="binding site" evidence="2">
    <location>
        <position position="308"/>
    </location>
    <ligand>
        <name>[4Fe-4S] cluster</name>
        <dbReference type="ChEBI" id="CHEBI:49883"/>
        <label>1</label>
    </ligand>
</feature>
<feature type="binding site" evidence="2">
    <location>
        <position position="312"/>
    </location>
    <ligand>
        <name>[4Fe-4S] cluster</name>
        <dbReference type="ChEBI" id="CHEBI:49883"/>
        <label>2</label>
    </ligand>
</feature>
<feature type="binding site" evidence="2">
    <location>
        <position position="386"/>
    </location>
    <ligand>
        <name>[4Fe-4S] cluster</name>
        <dbReference type="ChEBI" id="CHEBI:49883"/>
        <label>2</label>
    </ligand>
</feature>
<feature type="binding site" evidence="2">
    <location>
        <position position="389"/>
    </location>
    <ligand>
        <name>[4Fe-4S] cluster</name>
        <dbReference type="ChEBI" id="CHEBI:49883"/>
        <label>2</label>
    </ligand>
</feature>
<feature type="binding site" evidence="2">
    <location>
        <position position="392"/>
    </location>
    <ligand>
        <name>[4Fe-4S] cluster</name>
        <dbReference type="ChEBI" id="CHEBI:49883"/>
        <label>2</label>
    </ligand>
</feature>
<feature type="binding site" evidence="2">
    <location>
        <position position="396"/>
    </location>
    <ligand>
        <name>[4Fe-4S] cluster</name>
        <dbReference type="ChEBI" id="CHEBI:49883"/>
        <label>1</label>
    </ligand>
</feature>
<comment type="function">
    <text evidence="6 7">Oxidoreductase involved in syntrophic growth of S.wolfei with butyrate. Is presumed to link the electron flow from butyryl-CoA dehydrogenases to the membrane, in conjunction with the electron transfer flavoprotein EtfAB. May transfer electrons to the menaquinone pool of the membrane.</text>
</comment>
<comment type="cofactor">
    <cofactor evidence="2">
        <name>[4Fe-4S] cluster</name>
        <dbReference type="ChEBI" id="CHEBI:49883"/>
    </cofactor>
    <text evidence="2">Binds 2 [4Fe-4S] clusters per subunit.</text>
</comment>
<comment type="pathway">
    <text evidence="6 7">Lipid metabolism; butanoate metabolism.</text>
</comment>
<comment type="subunit">
    <text evidence="6 7">Might constitute a membrane-associated complex with EtfA (Swol_0697), EtfB (Swol_0696), and the butyryl-CoA dehydrogenase Swol_1933 and/or Swol_2052.</text>
</comment>
<comment type="subcellular location">
    <subcellularLocation>
        <location evidence="4">Cell membrane</location>
        <topology evidence="1">Multi-pass membrane protein</topology>
    </subcellularLocation>
</comment>
<comment type="induction">
    <text evidence="3 4">Highly expressed during syntrophic growth with butyrate (at protein level) (PubMed:19648244, PubMed:23468890). Seems to be constitutively expressed (PubMed:23468890).</text>
</comment>
<reference key="1">
    <citation type="journal article" date="2010" name="Environ. Microbiol.">
        <title>The genome of Syntrophomonas wolfei: new insights into syntrophic metabolism and biohydrogen production.</title>
        <authorList>
            <person name="Sieber J.R."/>
            <person name="Sims D.R."/>
            <person name="Han C."/>
            <person name="Kim E."/>
            <person name="Lykidis A."/>
            <person name="Lapidus A.L."/>
            <person name="McDonnald E."/>
            <person name="Rohlin L."/>
            <person name="Culley D.E."/>
            <person name="Gunsalus R."/>
            <person name="McInerney M.J."/>
        </authorList>
    </citation>
    <scope>NUCLEOTIDE SEQUENCE [LARGE SCALE GENOMIC DNA]</scope>
    <source>
        <strain>DSM 2245B / Goettingen</strain>
    </source>
</reference>
<reference key="2">
    <citation type="journal article" date="2009" name="J. Bacteriol.">
        <title>Involvement of NADH:acceptor oxidoreductase and butyryl coenzyme A dehydrogenase in reversed electron transport during syntrophic butyrate oxidation by Syntrophomonas wolfei.</title>
        <authorList>
            <person name="Mueller N."/>
            <person name="Schleheck D."/>
            <person name="Schink B."/>
        </authorList>
    </citation>
    <scope>IDENTIFICATION BY MASS SPECTROMETRY</scope>
    <scope>FUNCTION</scope>
    <scope>INDUCTION</scope>
    <scope>PATHWAY</scope>
</reference>
<reference key="3">
    <citation type="journal article" date="2013" name="PLoS ONE">
        <title>A proteomic view at the biochemistry of syntrophic butyrate oxidation in Syntrophomonas wolfei.</title>
        <authorList>
            <person name="Schmidt A."/>
            <person name="Mueller N."/>
            <person name="Schink B."/>
            <person name="Schleheck D."/>
        </authorList>
    </citation>
    <scope>IDENTIFICATION BY MASS SPECTROMETRY</scope>
    <scope>INDUCTION</scope>
    <scope>SUBCELLULAR LOCATION</scope>
    <scope>FUNCTION</scope>
    <scope>PATHWAY</scope>
</reference>
<gene>
    <name evidence="8" type="ordered locus">Swol_0698</name>
</gene>
<keyword id="KW-0004">4Fe-4S</keyword>
<keyword id="KW-1003">Cell membrane</keyword>
<keyword id="KW-0276">Fatty acid metabolism</keyword>
<keyword id="KW-0408">Iron</keyword>
<keyword id="KW-0411">Iron-sulfur</keyword>
<keyword id="KW-0443">Lipid metabolism</keyword>
<keyword id="KW-0472">Membrane</keyword>
<keyword id="KW-0479">Metal-binding</keyword>
<keyword id="KW-0560">Oxidoreductase</keyword>
<keyword id="KW-1185">Reference proteome</keyword>
<keyword id="KW-0677">Repeat</keyword>
<keyword id="KW-0812">Transmembrane</keyword>
<keyword id="KW-1133">Transmembrane helix</keyword>
<protein>
    <recommendedName>
        <fullName evidence="5">EtfAB:quinone oxidoreductase</fullName>
        <ecNumber evidence="7">1.18.-.-</ecNumber>
    </recommendedName>
</protein>
<accession>Q0AZ32</accession>
<proteinExistence type="evidence at protein level"/>
<name>ETFQR_SYNWW</name>